<proteinExistence type="inferred from homology"/>
<feature type="chain" id="PRO_0000222513" description="Replicase large subunit">
    <location>
        <begin position="1" status="less than"/>
        <end position="179"/>
    </location>
</feature>
<feature type="non-terminal residue">
    <location>
        <position position="1"/>
    </location>
</feature>
<reference key="1">
    <citation type="journal article" date="1986" name="Nucleic Acids Res.">
        <title>Analysis of the genome structure of tobacco rattle virus strain PSG.</title>
        <authorList>
            <person name="Cornelissen B.J.C."/>
            <person name="Linthorst H.J.M."/>
            <person name="Brederode F.T."/>
            <person name="Bol J.F."/>
        </authorList>
    </citation>
    <scope>NUCLEOTIDE SEQUENCE [GENOMIC RNA]</scope>
</reference>
<organism>
    <name type="scientific">Tobacco rattle virus (strain PSG)</name>
    <dbReference type="NCBI Taxonomy" id="12297"/>
    <lineage>
        <taxon>Viruses</taxon>
        <taxon>Riboviria</taxon>
        <taxon>Orthornavirae</taxon>
        <taxon>Kitrinoviricota</taxon>
        <taxon>Alsuviricetes</taxon>
        <taxon>Martellivirales</taxon>
        <taxon>Virgaviridae</taxon>
        <taxon>Tobravirus</taxon>
        <taxon>Tobacco rattle virus</taxon>
    </lineage>
</organism>
<name>RDRP_TRVPS</name>
<protein>
    <recommendedName>
        <fullName>Replicase large subunit</fullName>
        <ecNumber>2.1.1.-</ecNumber>
        <ecNumber>2.7.7.48</ecNumber>
        <ecNumber>3.6.4.13</ecNumber>
    </recommendedName>
</protein>
<accession>P05079</accession>
<keyword id="KW-0067">ATP-binding</keyword>
<keyword id="KW-0347">Helicase</keyword>
<keyword id="KW-0378">Hydrolase</keyword>
<keyword id="KW-0547">Nucleotide-binding</keyword>
<keyword id="KW-0548">Nucleotidyltransferase</keyword>
<keyword id="KW-1159">RNA suppression of termination</keyword>
<keyword id="KW-0696">RNA-directed RNA polymerase</keyword>
<keyword id="KW-0808">Transferase</keyword>
<keyword id="KW-0693">Viral RNA replication</keyword>
<dbReference type="EC" id="2.1.1.-"/>
<dbReference type="EC" id="2.7.7.48"/>
<dbReference type="EC" id="3.6.4.13"/>
<dbReference type="EMBL" id="X03685">
    <property type="protein sequence ID" value="CAA27319.1"/>
    <property type="molecule type" value="Genomic_RNA"/>
</dbReference>
<dbReference type="PIR" id="A05248">
    <property type="entry name" value="A05248"/>
</dbReference>
<dbReference type="SMR" id="P05079"/>
<dbReference type="GO" id="GO:0005524">
    <property type="term" value="F:ATP binding"/>
    <property type="evidence" value="ECO:0007669"/>
    <property type="project" value="UniProtKB-KW"/>
</dbReference>
<dbReference type="GO" id="GO:0016887">
    <property type="term" value="F:ATP hydrolysis activity"/>
    <property type="evidence" value="ECO:0007669"/>
    <property type="project" value="RHEA"/>
</dbReference>
<dbReference type="GO" id="GO:0003723">
    <property type="term" value="F:RNA binding"/>
    <property type="evidence" value="ECO:0007669"/>
    <property type="project" value="InterPro"/>
</dbReference>
<dbReference type="GO" id="GO:0003724">
    <property type="term" value="F:RNA helicase activity"/>
    <property type="evidence" value="ECO:0007669"/>
    <property type="project" value="UniProtKB-EC"/>
</dbReference>
<dbReference type="GO" id="GO:0003968">
    <property type="term" value="F:RNA-directed RNA polymerase activity"/>
    <property type="evidence" value="ECO:0007669"/>
    <property type="project" value="UniProtKB-KW"/>
</dbReference>
<dbReference type="GO" id="GO:0006351">
    <property type="term" value="P:DNA-templated transcription"/>
    <property type="evidence" value="ECO:0007669"/>
    <property type="project" value="InterPro"/>
</dbReference>
<dbReference type="InterPro" id="IPR043502">
    <property type="entry name" value="DNA/RNA_pol_sf"/>
</dbReference>
<dbReference type="InterPro" id="IPR001788">
    <property type="entry name" value="RNA-dep_RNA_pol_alsuvir"/>
</dbReference>
<dbReference type="Pfam" id="PF00978">
    <property type="entry name" value="RdRP_2"/>
    <property type="match status" value="1"/>
</dbReference>
<dbReference type="SUPFAM" id="SSF56672">
    <property type="entry name" value="DNA/RNA polymerases"/>
    <property type="match status" value="1"/>
</dbReference>
<evidence type="ECO:0000250" key="1"/>
<evidence type="ECO:0000305" key="2"/>
<sequence length="179" mass="19950">GAHLVPTKSGDADTYNANSDRTLCALLSELPLEKAVMVTYGGDDSLIAFPRGTQFVDPCPKLATKWNFECKIFKYDVPMFCGKFLLKTSSCYEFVPDPVKVLTKLGKKSIKDVQHLAEIYISLNDSNRALGNYMVVSKLSESVSDRYLYKGDSVHALCALWKHIKSFTALCTLLPRRKG</sequence>
<organismHost>
    <name type="scientific">Beta vulgaris</name>
    <name type="common">Sugar beet</name>
    <dbReference type="NCBI Taxonomy" id="161934"/>
</organismHost>
<organismHost>
    <name type="scientific">Capsicum annuum</name>
    <name type="common">Capsicum pepper</name>
    <dbReference type="NCBI Taxonomy" id="4072"/>
</organismHost>
<organismHost>
    <name type="scientific">Hyacinthus</name>
    <dbReference type="NCBI Taxonomy" id="82024"/>
</organismHost>
<organismHost>
    <name type="scientific">Narcissus pseudonarcissus</name>
    <name type="common">Daffodil</name>
    <dbReference type="NCBI Taxonomy" id="39639"/>
</organismHost>
<organismHost>
    <name type="scientific">Nicotiana tabacum</name>
    <name type="common">Common tobacco</name>
    <dbReference type="NCBI Taxonomy" id="4097"/>
</organismHost>
<organismHost>
    <name type="scientific">Solanum tuberosum</name>
    <name type="common">Potato</name>
    <dbReference type="NCBI Taxonomy" id="4113"/>
</organismHost>
<organismHost>
    <name type="scientific">Spinacia oleracea</name>
    <name type="common">Spinach</name>
    <dbReference type="NCBI Taxonomy" id="3562"/>
</organismHost>
<organismHost>
    <name type="scientific">Stellaria media</name>
    <name type="common">Common chickweed</name>
    <name type="synonym">Alsine media</name>
    <dbReference type="NCBI Taxonomy" id="13274"/>
</organismHost>
<organismHost>
    <name type="scientific">Tulipa</name>
    <dbReference type="NCBI Taxonomy" id="13305"/>
</organismHost>
<organismHost>
    <name type="scientific">Viola arvensis</name>
    <name type="common">European field pansy</name>
    <name type="synonym">Field violet</name>
    <dbReference type="NCBI Taxonomy" id="97415"/>
</organismHost>
<comment type="function">
    <text evidence="1">Replicase large subunit: is an RNA-dependent RNA polymerase active in viral RNA replication.</text>
</comment>
<comment type="catalytic activity">
    <reaction>
        <text>RNA(n) + a ribonucleoside 5'-triphosphate = RNA(n+1) + diphosphate</text>
        <dbReference type="Rhea" id="RHEA:21248"/>
        <dbReference type="Rhea" id="RHEA-COMP:14527"/>
        <dbReference type="Rhea" id="RHEA-COMP:17342"/>
        <dbReference type="ChEBI" id="CHEBI:33019"/>
        <dbReference type="ChEBI" id="CHEBI:61557"/>
        <dbReference type="ChEBI" id="CHEBI:140395"/>
        <dbReference type="EC" id="2.7.7.48"/>
    </reaction>
</comment>
<comment type="catalytic activity">
    <reaction>
        <text>ATP + H2O = ADP + phosphate + H(+)</text>
        <dbReference type="Rhea" id="RHEA:13065"/>
        <dbReference type="ChEBI" id="CHEBI:15377"/>
        <dbReference type="ChEBI" id="CHEBI:15378"/>
        <dbReference type="ChEBI" id="CHEBI:30616"/>
        <dbReference type="ChEBI" id="CHEBI:43474"/>
        <dbReference type="ChEBI" id="CHEBI:456216"/>
        <dbReference type="EC" id="3.6.4.13"/>
    </reaction>
</comment>
<comment type="similarity">
    <text evidence="2">Belongs to the ssRNA positive-strand viruses RNA-directed RNA polymerase family.</text>
</comment>